<evidence type="ECO:0000255" key="1">
    <source>
        <dbReference type="HAMAP-Rule" id="MF_00374"/>
    </source>
</evidence>
<evidence type="ECO:0000305" key="2"/>
<gene>
    <name evidence="1" type="primary">rpmC</name>
    <name type="ordered locus">msr0303</name>
</gene>
<proteinExistence type="inferred from homology"/>
<organism>
    <name type="scientific">Mesorhizobium japonicum (strain LMG 29417 / CECT 9101 / MAFF 303099)</name>
    <name type="common">Mesorhizobium loti (strain MAFF 303099)</name>
    <dbReference type="NCBI Taxonomy" id="266835"/>
    <lineage>
        <taxon>Bacteria</taxon>
        <taxon>Pseudomonadati</taxon>
        <taxon>Pseudomonadota</taxon>
        <taxon>Alphaproteobacteria</taxon>
        <taxon>Hyphomicrobiales</taxon>
        <taxon>Phyllobacteriaceae</taxon>
        <taxon>Mesorhizobium</taxon>
    </lineage>
</organism>
<name>RL29_RHILO</name>
<sequence length="66" mass="7531">MKAEDIRTKTQDQLTDDLASLKKEQFNLRFQKATGQLEKTARVRQVRKDIARIKTIAAEKSAAKKA</sequence>
<dbReference type="EMBL" id="BA000012">
    <property type="protein sequence ID" value="BAB47914.1"/>
    <property type="molecule type" value="Genomic_DNA"/>
</dbReference>
<dbReference type="RefSeq" id="WP_006205459.1">
    <property type="nucleotide sequence ID" value="NC_002678.2"/>
</dbReference>
<dbReference type="SMR" id="Q98N49"/>
<dbReference type="GeneID" id="91561412"/>
<dbReference type="KEGG" id="mlo:msr0303"/>
<dbReference type="eggNOG" id="COG0255">
    <property type="taxonomic scope" value="Bacteria"/>
</dbReference>
<dbReference type="HOGENOM" id="CLU_158491_1_0_5"/>
<dbReference type="Proteomes" id="UP000000552">
    <property type="component" value="Chromosome"/>
</dbReference>
<dbReference type="GO" id="GO:0022625">
    <property type="term" value="C:cytosolic large ribosomal subunit"/>
    <property type="evidence" value="ECO:0007669"/>
    <property type="project" value="TreeGrafter"/>
</dbReference>
<dbReference type="GO" id="GO:0003735">
    <property type="term" value="F:structural constituent of ribosome"/>
    <property type="evidence" value="ECO:0007669"/>
    <property type="project" value="InterPro"/>
</dbReference>
<dbReference type="GO" id="GO:0006412">
    <property type="term" value="P:translation"/>
    <property type="evidence" value="ECO:0007669"/>
    <property type="project" value="UniProtKB-UniRule"/>
</dbReference>
<dbReference type="CDD" id="cd00427">
    <property type="entry name" value="Ribosomal_L29_HIP"/>
    <property type="match status" value="1"/>
</dbReference>
<dbReference type="FunFam" id="1.10.287.310:FF:000001">
    <property type="entry name" value="50S ribosomal protein L29"/>
    <property type="match status" value="1"/>
</dbReference>
<dbReference type="Gene3D" id="1.10.287.310">
    <property type="match status" value="1"/>
</dbReference>
<dbReference type="HAMAP" id="MF_00374">
    <property type="entry name" value="Ribosomal_uL29"/>
    <property type="match status" value="1"/>
</dbReference>
<dbReference type="InterPro" id="IPR050063">
    <property type="entry name" value="Ribosomal_protein_uL29"/>
</dbReference>
<dbReference type="InterPro" id="IPR001854">
    <property type="entry name" value="Ribosomal_uL29"/>
</dbReference>
<dbReference type="InterPro" id="IPR018254">
    <property type="entry name" value="Ribosomal_uL29_CS"/>
</dbReference>
<dbReference type="InterPro" id="IPR036049">
    <property type="entry name" value="Ribosomal_uL29_sf"/>
</dbReference>
<dbReference type="NCBIfam" id="TIGR00012">
    <property type="entry name" value="L29"/>
    <property type="match status" value="1"/>
</dbReference>
<dbReference type="PANTHER" id="PTHR10916">
    <property type="entry name" value="60S RIBOSOMAL PROTEIN L35/50S RIBOSOMAL PROTEIN L29"/>
    <property type="match status" value="1"/>
</dbReference>
<dbReference type="PANTHER" id="PTHR10916:SF0">
    <property type="entry name" value="LARGE RIBOSOMAL SUBUNIT PROTEIN UL29C"/>
    <property type="match status" value="1"/>
</dbReference>
<dbReference type="Pfam" id="PF00831">
    <property type="entry name" value="Ribosomal_L29"/>
    <property type="match status" value="1"/>
</dbReference>
<dbReference type="SUPFAM" id="SSF46561">
    <property type="entry name" value="Ribosomal protein L29 (L29p)"/>
    <property type="match status" value="1"/>
</dbReference>
<dbReference type="PROSITE" id="PS00579">
    <property type="entry name" value="RIBOSOMAL_L29"/>
    <property type="match status" value="1"/>
</dbReference>
<comment type="similarity">
    <text evidence="1">Belongs to the universal ribosomal protein uL29 family.</text>
</comment>
<accession>Q98N49</accession>
<reference key="1">
    <citation type="journal article" date="2000" name="DNA Res.">
        <title>Complete genome structure of the nitrogen-fixing symbiotic bacterium Mesorhizobium loti.</title>
        <authorList>
            <person name="Kaneko T."/>
            <person name="Nakamura Y."/>
            <person name="Sato S."/>
            <person name="Asamizu E."/>
            <person name="Kato T."/>
            <person name="Sasamoto S."/>
            <person name="Watanabe A."/>
            <person name="Idesawa K."/>
            <person name="Ishikawa A."/>
            <person name="Kawashima K."/>
            <person name="Kimura T."/>
            <person name="Kishida Y."/>
            <person name="Kiyokawa C."/>
            <person name="Kohara M."/>
            <person name="Matsumoto M."/>
            <person name="Matsuno A."/>
            <person name="Mochizuki Y."/>
            <person name="Nakayama S."/>
            <person name="Nakazaki N."/>
            <person name="Shimpo S."/>
            <person name="Sugimoto M."/>
            <person name="Takeuchi C."/>
            <person name="Yamada M."/>
            <person name="Tabata S."/>
        </authorList>
    </citation>
    <scope>NUCLEOTIDE SEQUENCE [LARGE SCALE GENOMIC DNA]</scope>
    <source>
        <strain>LMG 29417 / CECT 9101 / MAFF 303099</strain>
    </source>
</reference>
<feature type="chain" id="PRO_0000130441" description="Large ribosomal subunit protein uL29">
    <location>
        <begin position="1"/>
        <end position="66"/>
    </location>
</feature>
<keyword id="KW-0687">Ribonucleoprotein</keyword>
<keyword id="KW-0689">Ribosomal protein</keyword>
<protein>
    <recommendedName>
        <fullName evidence="1">Large ribosomal subunit protein uL29</fullName>
    </recommendedName>
    <alternativeName>
        <fullName evidence="2">50S ribosomal protein L29</fullName>
    </alternativeName>
</protein>